<feature type="chain" id="PRO_0000123669" description="Ditrans,polycis-undecaprenyl-diphosphate synthase ((2E,6E)-farnesyl-diphosphate specific)">
    <location>
        <begin position="1"/>
        <end position="275"/>
    </location>
</feature>
<feature type="active site" evidence="1">
    <location>
        <position position="45"/>
    </location>
</feature>
<feature type="active site" description="Proton acceptor" evidence="1">
    <location>
        <position position="93"/>
    </location>
</feature>
<feature type="binding site" evidence="1">
    <location>
        <position position="45"/>
    </location>
    <ligand>
        <name>Mg(2+)</name>
        <dbReference type="ChEBI" id="CHEBI:18420"/>
    </ligand>
</feature>
<feature type="binding site" evidence="1">
    <location>
        <begin position="46"/>
        <end position="49"/>
    </location>
    <ligand>
        <name>substrate</name>
    </ligand>
</feature>
<feature type="binding site" evidence="1">
    <location>
        <position position="50"/>
    </location>
    <ligand>
        <name>substrate</name>
    </ligand>
</feature>
<feature type="binding site" evidence="1">
    <location>
        <position position="58"/>
    </location>
    <ligand>
        <name>substrate</name>
    </ligand>
</feature>
<feature type="binding site" evidence="1">
    <location>
        <position position="62"/>
    </location>
    <ligand>
        <name>substrate</name>
    </ligand>
</feature>
<feature type="binding site" evidence="1">
    <location>
        <begin position="90"/>
        <end position="92"/>
    </location>
    <ligand>
        <name>substrate</name>
    </ligand>
</feature>
<feature type="binding site" evidence="1">
    <location>
        <position position="94"/>
    </location>
    <ligand>
        <name>substrate</name>
    </ligand>
</feature>
<feature type="binding site" evidence="1">
    <location>
        <position position="96"/>
    </location>
    <ligand>
        <name>substrate</name>
    </ligand>
</feature>
<feature type="binding site" evidence="1">
    <location>
        <position position="213"/>
    </location>
    <ligand>
        <name>substrate</name>
    </ligand>
</feature>
<feature type="binding site" evidence="1">
    <location>
        <begin position="219"/>
        <end position="221"/>
    </location>
    <ligand>
        <name>substrate</name>
    </ligand>
</feature>
<feature type="binding site" evidence="1">
    <location>
        <position position="232"/>
    </location>
    <ligand>
        <name>Mg(2+)</name>
        <dbReference type="ChEBI" id="CHEBI:18420"/>
    </ligand>
</feature>
<protein>
    <recommendedName>
        <fullName evidence="1">Ditrans,polycis-undecaprenyl-diphosphate synthase ((2E,6E)-farnesyl-diphosphate specific)</fullName>
        <ecNumber evidence="1">2.5.1.31</ecNumber>
    </recommendedName>
    <alternativeName>
        <fullName evidence="1">Ditrans,polycis-undecaprenylcistransferase</fullName>
    </alternativeName>
    <alternativeName>
        <fullName evidence="1">Undecaprenyl diphosphate synthase</fullName>
        <shortName evidence="1">UDS</shortName>
    </alternativeName>
    <alternativeName>
        <fullName evidence="1">Undecaprenyl pyrophosphate synthase</fullName>
        <shortName evidence="1">UPP synthase</shortName>
    </alternativeName>
</protein>
<evidence type="ECO:0000255" key="1">
    <source>
        <dbReference type="HAMAP-Rule" id="MF_01139"/>
    </source>
</evidence>
<organism>
    <name type="scientific">Shewanella oneidensis (strain ATCC 700550 / JCM 31522 / CIP 106686 / LMG 19005 / NCIMB 14063 / MR-1)</name>
    <dbReference type="NCBI Taxonomy" id="211586"/>
    <lineage>
        <taxon>Bacteria</taxon>
        <taxon>Pseudomonadati</taxon>
        <taxon>Pseudomonadota</taxon>
        <taxon>Gammaproteobacteria</taxon>
        <taxon>Alteromonadales</taxon>
        <taxon>Shewanellaceae</taxon>
        <taxon>Shewanella</taxon>
    </lineage>
</organism>
<accession>Q8EGH1</accession>
<reference key="1">
    <citation type="journal article" date="2002" name="Nat. Biotechnol.">
        <title>Genome sequence of the dissimilatory metal ion-reducing bacterium Shewanella oneidensis.</title>
        <authorList>
            <person name="Heidelberg J.F."/>
            <person name="Paulsen I.T."/>
            <person name="Nelson K.E."/>
            <person name="Gaidos E.J."/>
            <person name="Nelson W.C."/>
            <person name="Read T.D."/>
            <person name="Eisen J.A."/>
            <person name="Seshadri R."/>
            <person name="Ward N.L."/>
            <person name="Methe B.A."/>
            <person name="Clayton R.A."/>
            <person name="Meyer T."/>
            <person name="Tsapin A."/>
            <person name="Scott J."/>
            <person name="Beanan M.J."/>
            <person name="Brinkac L.M."/>
            <person name="Daugherty S.C."/>
            <person name="DeBoy R.T."/>
            <person name="Dodson R.J."/>
            <person name="Durkin A.S."/>
            <person name="Haft D.H."/>
            <person name="Kolonay J.F."/>
            <person name="Madupu R."/>
            <person name="Peterson J.D."/>
            <person name="Umayam L.A."/>
            <person name="White O."/>
            <person name="Wolf A.M."/>
            <person name="Vamathevan J.J."/>
            <person name="Weidman J.F."/>
            <person name="Impraim M."/>
            <person name="Lee K."/>
            <person name="Berry K.J."/>
            <person name="Lee C."/>
            <person name="Mueller J."/>
            <person name="Khouri H.M."/>
            <person name="Gill J."/>
            <person name="Utterback T.R."/>
            <person name="McDonald L.A."/>
            <person name="Feldblyum T.V."/>
            <person name="Smith H.O."/>
            <person name="Venter J.C."/>
            <person name="Nealson K.H."/>
            <person name="Fraser C.M."/>
        </authorList>
    </citation>
    <scope>NUCLEOTIDE SEQUENCE [LARGE SCALE GENOMIC DNA]</scope>
    <source>
        <strain>ATCC 700550 / JCM 31522 / CIP 106686 / LMG 19005 / NCIMB 14063 / MR-1</strain>
    </source>
</reference>
<dbReference type="EC" id="2.5.1.31" evidence="1"/>
<dbReference type="EMBL" id="AE014299">
    <property type="protein sequence ID" value="AAN54688.1"/>
    <property type="molecule type" value="Genomic_DNA"/>
</dbReference>
<dbReference type="RefSeq" id="NP_717244.1">
    <property type="nucleotide sequence ID" value="NC_004347.2"/>
</dbReference>
<dbReference type="RefSeq" id="WP_011071788.1">
    <property type="nucleotide sequence ID" value="NC_004347.2"/>
</dbReference>
<dbReference type="SMR" id="Q8EGH1"/>
<dbReference type="STRING" id="211586.SO_1633"/>
<dbReference type="PaxDb" id="211586-SO_1633"/>
<dbReference type="KEGG" id="son:SO_1633"/>
<dbReference type="PATRIC" id="fig|1028802.3.peg.332"/>
<dbReference type="eggNOG" id="COG0020">
    <property type="taxonomic scope" value="Bacteria"/>
</dbReference>
<dbReference type="HOGENOM" id="CLU_038505_1_1_6"/>
<dbReference type="OrthoDB" id="4191603at2"/>
<dbReference type="PhylomeDB" id="Q8EGH1"/>
<dbReference type="BioCyc" id="SONE211586:G1GMP-1503-MONOMER"/>
<dbReference type="Proteomes" id="UP000008186">
    <property type="component" value="Chromosome"/>
</dbReference>
<dbReference type="GO" id="GO:0005829">
    <property type="term" value="C:cytosol"/>
    <property type="evidence" value="ECO:0000318"/>
    <property type="project" value="GO_Central"/>
</dbReference>
<dbReference type="GO" id="GO:0008834">
    <property type="term" value="F:ditrans,polycis-undecaprenyl-diphosphate synthase [(2E,6E)-farnesyl-diphosphate specific] activity"/>
    <property type="evidence" value="ECO:0000318"/>
    <property type="project" value="GO_Central"/>
</dbReference>
<dbReference type="GO" id="GO:0000287">
    <property type="term" value="F:magnesium ion binding"/>
    <property type="evidence" value="ECO:0000318"/>
    <property type="project" value="GO_Central"/>
</dbReference>
<dbReference type="GO" id="GO:0071555">
    <property type="term" value="P:cell wall organization"/>
    <property type="evidence" value="ECO:0007669"/>
    <property type="project" value="UniProtKB-KW"/>
</dbReference>
<dbReference type="GO" id="GO:0009252">
    <property type="term" value="P:peptidoglycan biosynthetic process"/>
    <property type="evidence" value="ECO:0007669"/>
    <property type="project" value="UniProtKB-UniRule"/>
</dbReference>
<dbReference type="GO" id="GO:0016094">
    <property type="term" value="P:polyprenol biosynthetic process"/>
    <property type="evidence" value="ECO:0000318"/>
    <property type="project" value="GO_Central"/>
</dbReference>
<dbReference type="GO" id="GO:0008360">
    <property type="term" value="P:regulation of cell shape"/>
    <property type="evidence" value="ECO:0007669"/>
    <property type="project" value="UniProtKB-KW"/>
</dbReference>
<dbReference type="CDD" id="cd00475">
    <property type="entry name" value="Cis_IPPS"/>
    <property type="match status" value="1"/>
</dbReference>
<dbReference type="FunFam" id="3.40.1180.10:FF:000001">
    <property type="entry name" value="(2E,6E)-farnesyl-diphosphate-specific ditrans,polycis-undecaprenyl-diphosphate synthase"/>
    <property type="match status" value="1"/>
</dbReference>
<dbReference type="Gene3D" id="3.40.1180.10">
    <property type="entry name" value="Decaprenyl diphosphate synthase-like"/>
    <property type="match status" value="1"/>
</dbReference>
<dbReference type="HAMAP" id="MF_01139">
    <property type="entry name" value="ISPT"/>
    <property type="match status" value="1"/>
</dbReference>
<dbReference type="InterPro" id="IPR001441">
    <property type="entry name" value="UPP_synth-like"/>
</dbReference>
<dbReference type="InterPro" id="IPR018520">
    <property type="entry name" value="UPP_synth-like_CS"/>
</dbReference>
<dbReference type="InterPro" id="IPR036424">
    <property type="entry name" value="UPP_synth-like_sf"/>
</dbReference>
<dbReference type="NCBIfam" id="NF011405">
    <property type="entry name" value="PRK14830.1"/>
    <property type="match status" value="1"/>
</dbReference>
<dbReference type="NCBIfam" id="TIGR00055">
    <property type="entry name" value="uppS"/>
    <property type="match status" value="1"/>
</dbReference>
<dbReference type="PANTHER" id="PTHR10291:SF0">
    <property type="entry name" value="DEHYDRODOLICHYL DIPHOSPHATE SYNTHASE 2"/>
    <property type="match status" value="1"/>
</dbReference>
<dbReference type="PANTHER" id="PTHR10291">
    <property type="entry name" value="DEHYDRODOLICHYL DIPHOSPHATE SYNTHASE FAMILY MEMBER"/>
    <property type="match status" value="1"/>
</dbReference>
<dbReference type="Pfam" id="PF01255">
    <property type="entry name" value="Prenyltransf"/>
    <property type="match status" value="1"/>
</dbReference>
<dbReference type="SUPFAM" id="SSF64005">
    <property type="entry name" value="Undecaprenyl diphosphate synthase"/>
    <property type="match status" value="1"/>
</dbReference>
<dbReference type="PROSITE" id="PS01066">
    <property type="entry name" value="UPP_SYNTHASE"/>
    <property type="match status" value="1"/>
</dbReference>
<sequence length="275" mass="30834">MSSTVEFDPQSRPTEADAYAQTSLPEVLPELVKQSLPKHVAIIMDGNGRWAQTQGKPRVMGHKAGVKAVRRAVSAASQLGIQSLTLFAFSSENWRRPDKEVSLLMELFFTVLQREIKLLDKNQVKLNIIGDISRFSARLQKQIRAAEEKTAGNSGLILNVAANYGGRWDILQAAQKLAEKVETGEMTSSQFTEEALSEHLCMQNQSEVDLIIRTGGDYRISNFVLWQAAYAELVFLDTLWPDFDEQAFHEAIATFANRQRRFGLTGSQIDEMRAL</sequence>
<comment type="function">
    <text evidence="1">Catalyzes the sequential condensation of isopentenyl diphosphate (IPP) with (2E,6E)-farnesyl diphosphate (E,E-FPP) to yield (2Z,6Z,10Z,14Z,18Z,22Z,26Z,30Z,34E,38E)-undecaprenyl diphosphate (di-trans,octa-cis-UPP). UPP is the precursor of glycosyl carrier lipid in the biosynthesis of bacterial cell wall polysaccharide components such as peptidoglycan and lipopolysaccharide.</text>
</comment>
<comment type="catalytic activity">
    <reaction evidence="1">
        <text>8 isopentenyl diphosphate + (2E,6E)-farnesyl diphosphate = di-trans,octa-cis-undecaprenyl diphosphate + 8 diphosphate</text>
        <dbReference type="Rhea" id="RHEA:27551"/>
        <dbReference type="ChEBI" id="CHEBI:33019"/>
        <dbReference type="ChEBI" id="CHEBI:58405"/>
        <dbReference type="ChEBI" id="CHEBI:128769"/>
        <dbReference type="ChEBI" id="CHEBI:175763"/>
        <dbReference type="EC" id="2.5.1.31"/>
    </reaction>
</comment>
<comment type="cofactor">
    <cofactor evidence="1">
        <name>Mg(2+)</name>
        <dbReference type="ChEBI" id="CHEBI:18420"/>
    </cofactor>
    <text evidence="1">Binds 2 magnesium ions per subunit.</text>
</comment>
<comment type="subunit">
    <text evidence="1">Homodimer.</text>
</comment>
<comment type="similarity">
    <text evidence="1">Belongs to the UPP synthase family.</text>
</comment>
<name>UPPS_SHEON</name>
<gene>
    <name evidence="1" type="primary">uppS</name>
    <name type="ordered locus">SO_1633</name>
</gene>
<keyword id="KW-0133">Cell shape</keyword>
<keyword id="KW-0961">Cell wall biogenesis/degradation</keyword>
<keyword id="KW-0460">Magnesium</keyword>
<keyword id="KW-0479">Metal-binding</keyword>
<keyword id="KW-0573">Peptidoglycan synthesis</keyword>
<keyword id="KW-1185">Reference proteome</keyword>
<keyword id="KW-0808">Transferase</keyword>
<proteinExistence type="inferred from homology"/>